<sequence>MNVILLDKIANLGNLGDQVVVKAGYARNYLLPQGKAVVANESNVKVFEARRAELEAKLAAELAAANQRAEKITALEAVVIASKAGDEGKLFGSVGNRDIADAVTAAGVELAKSEVRLPLGALRTTGDFEVEVQLHTEVKAVVKVSIVAEA</sequence>
<proteinExistence type="inferred from homology"/>
<accession>A4Y3F3</accession>
<reference key="1">
    <citation type="submission" date="2007-04" db="EMBL/GenBank/DDBJ databases">
        <title>Complete sequence of Shewanella putrefaciens CN-32.</title>
        <authorList>
            <consortium name="US DOE Joint Genome Institute"/>
            <person name="Copeland A."/>
            <person name="Lucas S."/>
            <person name="Lapidus A."/>
            <person name="Barry K."/>
            <person name="Detter J.C."/>
            <person name="Glavina del Rio T."/>
            <person name="Hammon N."/>
            <person name="Israni S."/>
            <person name="Dalin E."/>
            <person name="Tice H."/>
            <person name="Pitluck S."/>
            <person name="Chain P."/>
            <person name="Malfatti S."/>
            <person name="Shin M."/>
            <person name="Vergez L."/>
            <person name="Schmutz J."/>
            <person name="Larimer F."/>
            <person name="Land M."/>
            <person name="Hauser L."/>
            <person name="Kyrpides N."/>
            <person name="Mikhailova N."/>
            <person name="Romine M.F."/>
            <person name="Fredrickson J."/>
            <person name="Tiedje J."/>
            <person name="Richardson P."/>
        </authorList>
    </citation>
    <scope>NUCLEOTIDE SEQUENCE [LARGE SCALE GENOMIC DNA]</scope>
    <source>
        <strain>CN-32 / ATCC BAA-453</strain>
    </source>
</reference>
<organism>
    <name type="scientific">Shewanella putrefaciens (strain CN-32 / ATCC BAA-453)</name>
    <dbReference type="NCBI Taxonomy" id="319224"/>
    <lineage>
        <taxon>Bacteria</taxon>
        <taxon>Pseudomonadati</taxon>
        <taxon>Pseudomonadota</taxon>
        <taxon>Gammaproteobacteria</taxon>
        <taxon>Alteromonadales</taxon>
        <taxon>Shewanellaceae</taxon>
        <taxon>Shewanella</taxon>
    </lineage>
</organism>
<protein>
    <recommendedName>
        <fullName evidence="1">Large ribosomal subunit protein bL9</fullName>
    </recommendedName>
    <alternativeName>
        <fullName evidence="2">50S ribosomal protein L9</fullName>
    </alternativeName>
</protein>
<feature type="chain" id="PRO_1000014860" description="Large ribosomal subunit protein bL9">
    <location>
        <begin position="1"/>
        <end position="150"/>
    </location>
</feature>
<dbReference type="EMBL" id="CP000681">
    <property type="protein sequence ID" value="ABP74486.1"/>
    <property type="molecule type" value="Genomic_DNA"/>
</dbReference>
<dbReference type="SMR" id="A4Y3F3"/>
<dbReference type="STRING" id="319224.Sputcn32_0756"/>
<dbReference type="KEGG" id="spc:Sputcn32_0756"/>
<dbReference type="eggNOG" id="COG0359">
    <property type="taxonomic scope" value="Bacteria"/>
</dbReference>
<dbReference type="HOGENOM" id="CLU_078938_4_1_6"/>
<dbReference type="GO" id="GO:1990904">
    <property type="term" value="C:ribonucleoprotein complex"/>
    <property type="evidence" value="ECO:0007669"/>
    <property type="project" value="UniProtKB-KW"/>
</dbReference>
<dbReference type="GO" id="GO:0005840">
    <property type="term" value="C:ribosome"/>
    <property type="evidence" value="ECO:0007669"/>
    <property type="project" value="UniProtKB-KW"/>
</dbReference>
<dbReference type="GO" id="GO:0019843">
    <property type="term" value="F:rRNA binding"/>
    <property type="evidence" value="ECO:0007669"/>
    <property type="project" value="UniProtKB-UniRule"/>
</dbReference>
<dbReference type="GO" id="GO:0003735">
    <property type="term" value="F:structural constituent of ribosome"/>
    <property type="evidence" value="ECO:0007669"/>
    <property type="project" value="InterPro"/>
</dbReference>
<dbReference type="GO" id="GO:0006412">
    <property type="term" value="P:translation"/>
    <property type="evidence" value="ECO:0007669"/>
    <property type="project" value="UniProtKB-UniRule"/>
</dbReference>
<dbReference type="FunFam" id="3.10.430.100:FF:000001">
    <property type="entry name" value="50S ribosomal protein L9"/>
    <property type="match status" value="1"/>
</dbReference>
<dbReference type="FunFam" id="3.40.5.10:FF:000001">
    <property type="entry name" value="50S ribosomal protein L9"/>
    <property type="match status" value="1"/>
</dbReference>
<dbReference type="Gene3D" id="3.10.430.100">
    <property type="entry name" value="Ribosomal protein L9, C-terminal domain"/>
    <property type="match status" value="1"/>
</dbReference>
<dbReference type="Gene3D" id="3.40.5.10">
    <property type="entry name" value="Ribosomal protein L9, N-terminal domain"/>
    <property type="match status" value="1"/>
</dbReference>
<dbReference type="HAMAP" id="MF_00503">
    <property type="entry name" value="Ribosomal_bL9"/>
    <property type="match status" value="1"/>
</dbReference>
<dbReference type="InterPro" id="IPR000244">
    <property type="entry name" value="Ribosomal_bL9"/>
</dbReference>
<dbReference type="InterPro" id="IPR009027">
    <property type="entry name" value="Ribosomal_bL9/RNase_H1_N"/>
</dbReference>
<dbReference type="InterPro" id="IPR020594">
    <property type="entry name" value="Ribosomal_bL9_bac/chp"/>
</dbReference>
<dbReference type="InterPro" id="IPR020069">
    <property type="entry name" value="Ribosomal_bL9_C"/>
</dbReference>
<dbReference type="InterPro" id="IPR036791">
    <property type="entry name" value="Ribosomal_bL9_C_sf"/>
</dbReference>
<dbReference type="InterPro" id="IPR020070">
    <property type="entry name" value="Ribosomal_bL9_N"/>
</dbReference>
<dbReference type="InterPro" id="IPR036935">
    <property type="entry name" value="Ribosomal_bL9_N_sf"/>
</dbReference>
<dbReference type="NCBIfam" id="TIGR00158">
    <property type="entry name" value="L9"/>
    <property type="match status" value="1"/>
</dbReference>
<dbReference type="PANTHER" id="PTHR21368">
    <property type="entry name" value="50S RIBOSOMAL PROTEIN L9"/>
    <property type="match status" value="1"/>
</dbReference>
<dbReference type="Pfam" id="PF03948">
    <property type="entry name" value="Ribosomal_L9_C"/>
    <property type="match status" value="1"/>
</dbReference>
<dbReference type="Pfam" id="PF01281">
    <property type="entry name" value="Ribosomal_L9_N"/>
    <property type="match status" value="1"/>
</dbReference>
<dbReference type="SUPFAM" id="SSF55658">
    <property type="entry name" value="L9 N-domain-like"/>
    <property type="match status" value="1"/>
</dbReference>
<dbReference type="SUPFAM" id="SSF55653">
    <property type="entry name" value="Ribosomal protein L9 C-domain"/>
    <property type="match status" value="1"/>
</dbReference>
<dbReference type="PROSITE" id="PS00651">
    <property type="entry name" value="RIBOSOMAL_L9"/>
    <property type="match status" value="1"/>
</dbReference>
<gene>
    <name evidence="1" type="primary">rplI</name>
    <name type="ordered locus">Sputcn32_0756</name>
</gene>
<name>RL9_SHEPC</name>
<keyword id="KW-0687">Ribonucleoprotein</keyword>
<keyword id="KW-0689">Ribosomal protein</keyword>
<keyword id="KW-0694">RNA-binding</keyword>
<keyword id="KW-0699">rRNA-binding</keyword>
<comment type="function">
    <text evidence="1">Binds to the 23S rRNA.</text>
</comment>
<comment type="similarity">
    <text evidence="1">Belongs to the bacterial ribosomal protein bL9 family.</text>
</comment>
<evidence type="ECO:0000255" key="1">
    <source>
        <dbReference type="HAMAP-Rule" id="MF_00503"/>
    </source>
</evidence>
<evidence type="ECO:0000305" key="2"/>